<name>TERL_BPLSK</name>
<keyword id="KW-0255">Endonuclease</keyword>
<keyword id="KW-0378">Hydrolase</keyword>
<keyword id="KW-0460">Magnesium</keyword>
<keyword id="KW-0464">Manganese</keyword>
<keyword id="KW-0479">Metal-binding</keyword>
<keyword id="KW-0540">Nuclease</keyword>
<keyword id="KW-1185">Reference proteome</keyword>
<keyword id="KW-0231">Viral genome packaging</keyword>
<keyword id="KW-1188">Viral release from host cell</keyword>
<dbReference type="EC" id="3.1.-.-"/>
<dbReference type="EC" id="3.6.4.-"/>
<dbReference type="EMBL" id="AF011378">
    <property type="protein sequence ID" value="AAB70041.1"/>
    <property type="molecule type" value="Genomic_DNA"/>
</dbReference>
<dbReference type="RefSeq" id="NP_044948.1">
    <property type="nucleotide sequence ID" value="NC_001835.1"/>
</dbReference>
<dbReference type="SMR" id="O21870"/>
<dbReference type="GeneID" id="1261297"/>
<dbReference type="KEGG" id="vg:1261297"/>
<dbReference type="Proteomes" id="UP000000839">
    <property type="component" value="Genome"/>
</dbReference>
<dbReference type="GO" id="GO:0004519">
    <property type="term" value="F:endonuclease activity"/>
    <property type="evidence" value="ECO:0007669"/>
    <property type="project" value="UniProtKB-KW"/>
</dbReference>
<dbReference type="GO" id="GO:0046872">
    <property type="term" value="F:metal ion binding"/>
    <property type="evidence" value="ECO:0007669"/>
    <property type="project" value="UniProtKB-KW"/>
</dbReference>
<dbReference type="Gene3D" id="3.40.50.300">
    <property type="entry name" value="P-loop containing nucleotide triphosphate hydrolases"/>
    <property type="match status" value="1"/>
</dbReference>
<dbReference type="InterPro" id="IPR027417">
    <property type="entry name" value="P-loop_NTPase"/>
</dbReference>
<dbReference type="InterPro" id="IPR046461">
    <property type="entry name" value="TerL_ATPase"/>
</dbReference>
<dbReference type="InterPro" id="IPR046462">
    <property type="entry name" value="TerL_nuclease"/>
</dbReference>
<dbReference type="InterPro" id="IPR005021">
    <property type="entry name" value="Terminase_largesu-like"/>
</dbReference>
<dbReference type="PANTHER" id="PTHR41287">
    <property type="match status" value="1"/>
</dbReference>
<dbReference type="PANTHER" id="PTHR41287:SF1">
    <property type="entry name" value="PROTEIN YMFN"/>
    <property type="match status" value="1"/>
</dbReference>
<dbReference type="Pfam" id="PF03354">
    <property type="entry name" value="TerL_ATPase"/>
    <property type="match status" value="1"/>
</dbReference>
<dbReference type="Pfam" id="PF20441">
    <property type="entry name" value="TerL_nuclease"/>
    <property type="match status" value="1"/>
</dbReference>
<feature type="chain" id="PRO_0000438251" description="Terminase large subunit">
    <location>
        <begin position="1"/>
        <end position="540"/>
    </location>
</feature>
<feature type="binding site" evidence="2">
    <location>
        <position position="352"/>
    </location>
    <ligand>
        <name>Mn(2+)</name>
        <dbReference type="ChEBI" id="CHEBI:29035"/>
        <label>1</label>
        <note>catalytic; for nuclease activity</note>
    </ligand>
</feature>
<feature type="binding site" evidence="2">
    <location>
        <position position="352"/>
    </location>
    <ligand>
        <name>Mn(2+)</name>
        <dbReference type="ChEBI" id="CHEBI:29035"/>
        <label>2</label>
        <note>catalytic; for nuclease activity</note>
    </ligand>
</feature>
<feature type="binding site" evidence="2">
    <location>
        <position position="424"/>
    </location>
    <ligand>
        <name>Mn(2+)</name>
        <dbReference type="ChEBI" id="CHEBI:29035"/>
        <label>1</label>
        <note>catalytic; for nuclease activity</note>
    </ligand>
</feature>
<feature type="binding site" evidence="2">
    <location>
        <position position="523"/>
    </location>
    <ligand>
        <name>Mn(2+)</name>
        <dbReference type="ChEBI" id="CHEBI:29035"/>
        <label>2</label>
        <note>catalytic; for nuclease activity</note>
    </ligand>
</feature>
<comment type="function">
    <text evidence="3">The terminase large subunit acts as an ATP driven molecular motor necessary for viral DNA translocation into empty capsids and as an endonuclease that cuts the viral genome to initiate and to end a packaging reaction (By similarity). The terminase lies at a unique vertex of the procapsid and is composed of two subunits, a small terminase subunit involved in viral DNA recognition (packaging sequence), and a large terminase subunit possessing endonucleolytic and ATPase activities (By similarity). Both terminase subunits heterooligomerize and are docked on the portal protein to form the packaging machine (By similarity). The terminase large subunit exhibits endonuclease activity and cleaves the viral genome concatemer (By similarity).</text>
</comment>
<comment type="cofactor">
    <cofactor evidence="2">
        <name>Mn(2+)</name>
        <dbReference type="ChEBI" id="CHEBI:29035"/>
    </cofactor>
    <cofactor evidence="2">
        <name>Mg(2+)</name>
        <dbReference type="ChEBI" id="CHEBI:18420"/>
    </cofactor>
    <text evidence="2">Binds 2 divalent metal cations per subunit.</text>
</comment>
<comment type="subunit">
    <text evidence="3">Interacts with the terminase small subunit; the active complex is probably heterooligomeric.</text>
</comment>
<comment type="similarity">
    <text evidence="4">Belongs to the skunavirus terminase large subunit family.</text>
</comment>
<proteinExistence type="inferred from homology"/>
<reference key="1">
    <citation type="journal article" date="1997" name="Mol. Microbiol.">
        <title>Analysis of the DNA sequence, gene expression, origin of replication and modular structure of the Lactococcus lactis lytic bacteriophage sk1.</title>
        <authorList>
            <person name="Chandry P.S."/>
            <person name="Moore S.C."/>
            <person name="Boyce J.D."/>
            <person name="Davidson B.E."/>
            <person name="Hillier A.J."/>
        </authorList>
    </citation>
    <scope>NUCLEOTIDE SEQUENCE [LARGE SCALE GENOMIC DNA]</scope>
</reference>
<organismHost>
    <name type="scientific">Lactococcus lactis</name>
    <dbReference type="NCBI Taxonomy" id="1358"/>
</organismHost>
<organism>
    <name type="scientific">Lactococcus phage SK1</name>
    <name type="common">Lactococcus lactis bacteriophage SK1</name>
    <dbReference type="NCBI Taxonomy" id="2905675"/>
    <lineage>
        <taxon>Viruses</taxon>
        <taxon>Duplodnaviria</taxon>
        <taxon>Heunggongvirae</taxon>
        <taxon>Uroviricota</taxon>
        <taxon>Caudoviricetes</taxon>
        <taxon>Skunavirus</taxon>
        <taxon>Skunavirus sk1</taxon>
    </lineage>
</organism>
<accession>O21870</accession>
<protein>
    <recommendedName>
        <fullName evidence="1">Terminase large subunit</fullName>
    </recommendedName>
    <alternativeName>
        <fullName>DNA-packaging protein</fullName>
    </alternativeName>
    <alternativeName>
        <fullName evidence="4">Gene product 2</fullName>
        <shortName evidence="4">gp2</shortName>
    </alternativeName>
    <domain>
        <recommendedName>
            <fullName>Endonuclease</fullName>
            <ecNumber>3.1.-.-</ecNumber>
        </recommendedName>
    </domain>
    <domain>
        <recommendedName>
            <fullName>ATPase</fullName>
            <ecNumber>3.6.4.-</ecNumber>
        </recommendedName>
    </domain>
</protein>
<sequence>MYYLNKMLEYNKENGIIINKYIRKTIQKQIRIHNKYIYRYDRVTQAIEWIEDNFYLTTGNLMKIELLPTQRWWYELMLGYDMIDEKGVQVNLINEIFLNLGRGSGKSSLMATRVLNWMILGGQYGGESLVIAYDNTQARHVFDQVRNQTEASDTLRVYNENKIFKSTKQGLEFASFKTTFKKQTNDTLRAQGGNSSLNIFDEVHTYGEDITESVNKGSRQKQDNWQSIYITSGGLKRDGLYDKLVERFKSEEEFYNDRSFGLLYMLENHEQVKDKKNWTMALPLIGSVPKWSGVIEEYELAQGDPALQNKFLAFNMGLPMQDTAYYFTPQDTKLTDFNLSVFNKNRTYVGIDLSLIGDLTAVSFVCELEGKTYSHTLTFSVRSQYEQLDTEQQELWTEFVDRGELILLDTEYINVNDLIPHINDFRTKTGCRLRKIGYDPARYEILKGLIERYFFDKDGDNQRAIRQGFSMNDYIKLLKSKLVENKLIHNQKVMQWALNNTAVKIGQSGDYMYTKKLEKDKIDPTVALTMALEMAVSDEV</sequence>
<evidence type="ECO:0000250" key="1">
    <source>
        <dbReference type="UniProtKB" id="D3WAC1"/>
    </source>
</evidence>
<evidence type="ECO:0000250" key="2">
    <source>
        <dbReference type="UniProtKB" id="P54308"/>
    </source>
</evidence>
<evidence type="ECO:0000250" key="3">
    <source>
        <dbReference type="UniProtKB" id="Q9MCT1"/>
    </source>
</evidence>
<evidence type="ECO:0000305" key="4"/>